<comment type="function">
    <text evidence="1">Forms an interface between the RNA polymerase II enzyme and chaperone/scaffolding protein, suggesting that it is required to connect RNA polymerase II to regulators of protein complex formation.</text>
</comment>
<comment type="subunit">
    <text evidence="1">Tightly associated with the RNA polymerase II complex (By similarity). Component of the R2TP complex composed at least of RUVBL1, RUVBL2, RPAP3 and PIHD1 (By similarity). Component of the PAQosome complex which is responsible for the biogenesis of several protein complexes and which consists of R2TP complex members RUVBL1, RUVBL2, RPAP3 and PIH1D1, URI complex members PFDN2, PFDN6, PDRG1, UXT and URI1 as well as ASDURF, POLR2E and DNAAF10/WDR92 (By similarity). Interacts with PIH1D1 (By similarity). Interacts with TSC1 and TSC2 (By similarity). Interacts with PRPF8 and EFTUD2 in a ZNHIT2-dependent manner (By similarity).</text>
</comment>
<comment type="similarity">
    <text evidence="3">Belongs to the RPAP3 family.</text>
</comment>
<organism>
    <name type="scientific">Rattus norvegicus</name>
    <name type="common">Rat</name>
    <dbReference type="NCBI Taxonomy" id="10116"/>
    <lineage>
        <taxon>Eukaryota</taxon>
        <taxon>Metazoa</taxon>
        <taxon>Chordata</taxon>
        <taxon>Craniata</taxon>
        <taxon>Vertebrata</taxon>
        <taxon>Euteleostomi</taxon>
        <taxon>Mammalia</taxon>
        <taxon>Eutheria</taxon>
        <taxon>Euarchontoglires</taxon>
        <taxon>Glires</taxon>
        <taxon>Rodentia</taxon>
        <taxon>Myomorpha</taxon>
        <taxon>Muroidea</taxon>
        <taxon>Muridae</taxon>
        <taxon>Murinae</taxon>
        <taxon>Rattus</taxon>
    </lineage>
</organism>
<proteinExistence type="evidence at protein level"/>
<feature type="initiator methionine" description="Removed" evidence="1">
    <location>
        <position position="1"/>
    </location>
</feature>
<feature type="chain" id="PRO_0000302796" description="RNA polymerase II-associated protein 3">
    <location>
        <begin position="2"/>
        <end position="659"/>
    </location>
</feature>
<feature type="repeat" description="TPR 1">
    <location>
        <begin position="8"/>
        <end position="41"/>
    </location>
</feature>
<feature type="repeat" description="TPR 2">
    <location>
        <begin position="133"/>
        <end position="166"/>
    </location>
</feature>
<feature type="repeat" description="TPR 3">
    <location>
        <begin position="168"/>
        <end position="200"/>
    </location>
</feature>
<feature type="repeat" description="TPR 4">
    <location>
        <begin position="201"/>
        <end position="234"/>
    </location>
</feature>
<feature type="repeat" description="TPR 5">
    <location>
        <begin position="282"/>
        <end position="315"/>
    </location>
</feature>
<feature type="repeat" description="TPR 6">
    <location>
        <begin position="317"/>
        <end position="349"/>
    </location>
</feature>
<feature type="repeat" description="TPR 7">
    <location>
        <begin position="350"/>
        <end position="383"/>
    </location>
</feature>
<feature type="region of interest" description="Disordered" evidence="2">
    <location>
        <begin position="39"/>
        <end position="81"/>
    </location>
</feature>
<feature type="region of interest" description="Disordered" evidence="2">
    <location>
        <begin position="107"/>
        <end position="128"/>
    </location>
</feature>
<feature type="region of interest" description="Disordered" evidence="2">
    <location>
        <begin position="447"/>
        <end position="485"/>
    </location>
</feature>
<feature type="compositionally biased region" description="Basic residues" evidence="2">
    <location>
        <begin position="60"/>
        <end position="69"/>
    </location>
</feature>
<feature type="compositionally biased region" description="Basic and acidic residues" evidence="2">
    <location>
        <begin position="70"/>
        <end position="81"/>
    </location>
</feature>
<feature type="modified residue" description="N-acetylthreonine" evidence="1">
    <location>
        <position position="2"/>
    </location>
</feature>
<feature type="modified residue" description="Phosphoserine" evidence="1">
    <location>
        <position position="87"/>
    </location>
</feature>
<feature type="modified residue" description="Phosphoserine" evidence="1">
    <location>
        <position position="116"/>
    </location>
</feature>
<feature type="modified residue" description="Phosphoserine" evidence="1">
    <location>
        <position position="119"/>
    </location>
</feature>
<feature type="modified residue" description="Phosphoserine" evidence="4">
    <location>
        <position position="121"/>
    </location>
</feature>
<feature type="modified residue" description="Phosphoserine" evidence="1">
    <location>
        <position position="474"/>
    </location>
</feature>
<feature type="cross-link" description="Glycyl lysine isopeptide (Lys-Gly) (interchain with G-Cter in SUMO2)" evidence="1">
    <location>
        <position position="491"/>
    </location>
</feature>
<gene>
    <name type="primary">Rpap3</name>
</gene>
<protein>
    <recommendedName>
        <fullName>RNA polymerase II-associated protein 3</fullName>
    </recommendedName>
</protein>
<name>RPAP3_RAT</name>
<accession>Q68FQ7</accession>
<reference key="1">
    <citation type="journal article" date="2004" name="Genome Res.">
        <title>The status, quality, and expansion of the NIH full-length cDNA project: the Mammalian Gene Collection (MGC).</title>
        <authorList>
            <consortium name="The MGC Project Team"/>
        </authorList>
    </citation>
    <scope>NUCLEOTIDE SEQUENCE [LARGE SCALE MRNA]</scope>
    <source>
        <tissue>Testis</tissue>
    </source>
</reference>
<reference key="2">
    <citation type="journal article" date="2012" name="Nat. Commun.">
        <title>Quantitative maps of protein phosphorylation sites across 14 different rat organs and tissues.</title>
        <authorList>
            <person name="Lundby A."/>
            <person name="Secher A."/>
            <person name="Lage K."/>
            <person name="Nordsborg N.B."/>
            <person name="Dmytriyev A."/>
            <person name="Lundby C."/>
            <person name="Olsen J.V."/>
        </authorList>
    </citation>
    <scope>PHOSPHORYLATION [LARGE SCALE ANALYSIS] AT SER-121</scope>
    <scope>IDENTIFICATION BY MASS SPECTROMETRY [LARGE SCALE ANALYSIS]</scope>
</reference>
<keyword id="KW-0007">Acetylation</keyword>
<keyword id="KW-1017">Isopeptide bond</keyword>
<keyword id="KW-0597">Phosphoprotein</keyword>
<keyword id="KW-1185">Reference proteome</keyword>
<keyword id="KW-0677">Repeat</keyword>
<keyword id="KW-0802">TPR repeat</keyword>
<keyword id="KW-0832">Ubl conjugation</keyword>
<sequence>MTSTSKAVELQLQVKHNAEELQDFMRDLEHWEKTMRQKDLELRRQSGVPEENLPPIRNGSFRKKKKRKTKDSSKKTKEENTKNRIKSFDYDAWAKLDVDSILDELDKEDSTHDSVSQESESDEDGVRVDSQKALVLKEKGNKYFKQGKYDEAIECYTKGMDADPYNPVLPTNRASAYFRLKKFAVAESDCNLAIALSRSYTKAYARRGAARFALQKLEDARKDYVKVLELEPDNFEATNELRKIDQALTSKENSHPKDIAAVIKPAEGERKANEDQRGRQKAIAEKDLGNGFFKEGKYEQAIECYTRGIAADSTNALLPANRAMAYLKVQKYEEAERDCTQAILLDGSYSKAFARRGTARTFLGKINEAKQDFETVLLLEPGNKQAVTELSRIKKELIEKGRWDDVFLDSTQRHNVVKPVDSPHRGSPKALKKVFIEETGNLIESVDAPESSATVPESDRAAVAVDTGRKKDFSQGDSVSSGETPRAKVLKIEAVGDSSAPQAQVDVKQGVRQSVSEKTSVRVAQTPGQLAAVVLPPVPANSFQLESDFRQLRSSPEMLYQYVKKIEPSLYPKLFQKNLDPDVFNQIIKILHDFYVEREKPALIFEVLERLSQLRRFDMAVMFMSGTERELTKVLFNHLEKSELKEDSVEELKKRYGGG</sequence>
<evidence type="ECO:0000250" key="1">
    <source>
        <dbReference type="UniProtKB" id="Q9H6T3"/>
    </source>
</evidence>
<evidence type="ECO:0000256" key="2">
    <source>
        <dbReference type="SAM" id="MobiDB-lite"/>
    </source>
</evidence>
<evidence type="ECO:0000305" key="3"/>
<evidence type="ECO:0007744" key="4">
    <source>
    </source>
</evidence>
<dbReference type="EMBL" id="BC079414">
    <property type="protein sequence ID" value="AAH79414.1"/>
    <property type="molecule type" value="mRNA"/>
</dbReference>
<dbReference type="RefSeq" id="NP_001004243.1">
    <property type="nucleotide sequence ID" value="NM_001004243.1"/>
</dbReference>
<dbReference type="RefSeq" id="XP_008763912.1">
    <property type="nucleotide sequence ID" value="XM_008765690.4"/>
</dbReference>
<dbReference type="RefSeq" id="XP_017450273.1">
    <property type="nucleotide sequence ID" value="XM_017594784.3"/>
</dbReference>
<dbReference type="RefSeq" id="XP_017450274.1">
    <property type="nucleotide sequence ID" value="XM_017594785.3"/>
</dbReference>
<dbReference type="SMR" id="Q68FQ7"/>
<dbReference type="BioGRID" id="256480">
    <property type="interactions" value="1"/>
</dbReference>
<dbReference type="FunCoup" id="Q68FQ7">
    <property type="interactions" value="3238"/>
</dbReference>
<dbReference type="IntAct" id="Q68FQ7">
    <property type="interactions" value="1"/>
</dbReference>
<dbReference type="MINT" id="Q68FQ7"/>
<dbReference type="STRING" id="10116.ENSRNOP00000074251"/>
<dbReference type="iPTMnet" id="Q68FQ7"/>
<dbReference type="PhosphoSitePlus" id="Q68FQ7"/>
<dbReference type="jPOST" id="Q68FQ7"/>
<dbReference type="GeneID" id="300189"/>
<dbReference type="KEGG" id="rno:300189"/>
<dbReference type="UCSC" id="RGD:1303036">
    <property type="organism name" value="rat"/>
</dbReference>
<dbReference type="AGR" id="RGD:1303036"/>
<dbReference type="CTD" id="79657"/>
<dbReference type="RGD" id="1303036">
    <property type="gene designation" value="Rpap3"/>
</dbReference>
<dbReference type="VEuPathDB" id="HostDB:ENSRNOG00000053405"/>
<dbReference type="eggNOG" id="KOG4648">
    <property type="taxonomic scope" value="Eukaryota"/>
</dbReference>
<dbReference type="HOGENOM" id="CLU_023272_1_0_1"/>
<dbReference type="InParanoid" id="Q68FQ7"/>
<dbReference type="PRO" id="PR:Q68FQ7"/>
<dbReference type="Proteomes" id="UP000002494">
    <property type="component" value="Chromosome 7"/>
</dbReference>
<dbReference type="Bgee" id="ENSRNOG00000053405">
    <property type="expression patterns" value="Expressed in cerebellum and 20 other cell types or tissues"/>
</dbReference>
<dbReference type="GO" id="GO:0097255">
    <property type="term" value="C:R2TP complex"/>
    <property type="evidence" value="ECO:0000266"/>
    <property type="project" value="RGD"/>
</dbReference>
<dbReference type="GO" id="GO:1990062">
    <property type="term" value="C:RPAP3/R2TP/prefoldin-like complex"/>
    <property type="evidence" value="ECO:0000266"/>
    <property type="project" value="RGD"/>
</dbReference>
<dbReference type="FunFam" id="1.25.40.10:FF:000057">
    <property type="entry name" value="RNA polymerase II associated protein 3"/>
    <property type="match status" value="2"/>
</dbReference>
<dbReference type="Gene3D" id="1.25.40.10">
    <property type="entry name" value="Tetratricopeptide repeat domain"/>
    <property type="match status" value="2"/>
</dbReference>
<dbReference type="InterPro" id="IPR051966">
    <property type="entry name" value="RPAP3"/>
</dbReference>
<dbReference type="InterPro" id="IPR025986">
    <property type="entry name" value="RPAP3-like_C"/>
</dbReference>
<dbReference type="InterPro" id="IPR011990">
    <property type="entry name" value="TPR-like_helical_dom_sf"/>
</dbReference>
<dbReference type="InterPro" id="IPR019734">
    <property type="entry name" value="TPR_rpt"/>
</dbReference>
<dbReference type="PANTHER" id="PTHR46423">
    <property type="entry name" value="RNA POLYMERASE II-ASSOCIATED PROTEIN 3"/>
    <property type="match status" value="1"/>
</dbReference>
<dbReference type="PANTHER" id="PTHR46423:SF1">
    <property type="entry name" value="RNA POLYMERASE II-ASSOCIATED PROTEIN 3"/>
    <property type="match status" value="1"/>
</dbReference>
<dbReference type="Pfam" id="PF13877">
    <property type="entry name" value="RPAP3_C"/>
    <property type="match status" value="1"/>
</dbReference>
<dbReference type="Pfam" id="PF00515">
    <property type="entry name" value="TPR_1"/>
    <property type="match status" value="1"/>
</dbReference>
<dbReference type="Pfam" id="PF13181">
    <property type="entry name" value="TPR_8"/>
    <property type="match status" value="1"/>
</dbReference>
<dbReference type="SMART" id="SM00028">
    <property type="entry name" value="TPR"/>
    <property type="match status" value="6"/>
</dbReference>
<dbReference type="SUPFAM" id="SSF48452">
    <property type="entry name" value="TPR-like"/>
    <property type="match status" value="2"/>
</dbReference>
<dbReference type="PROSITE" id="PS50005">
    <property type="entry name" value="TPR"/>
    <property type="match status" value="5"/>
</dbReference>
<dbReference type="PROSITE" id="PS50293">
    <property type="entry name" value="TPR_REGION"/>
    <property type="match status" value="1"/>
</dbReference>